<accession>O22704</accession>
<name>CYP5F_ARATH</name>
<reference key="1">
    <citation type="journal article" date="2000" name="Nature">
        <title>Sequence and analysis of chromosome 1 of the plant Arabidopsis thaliana.</title>
        <authorList>
            <person name="Theologis A."/>
            <person name="Ecker J.R."/>
            <person name="Palm C.J."/>
            <person name="Federspiel N.A."/>
            <person name="Kaul S."/>
            <person name="White O."/>
            <person name="Alonso J."/>
            <person name="Altafi H."/>
            <person name="Araujo R."/>
            <person name="Bowman C.L."/>
            <person name="Brooks S.Y."/>
            <person name="Buehler E."/>
            <person name="Chan A."/>
            <person name="Chao Q."/>
            <person name="Chen H."/>
            <person name="Cheuk R.F."/>
            <person name="Chin C.W."/>
            <person name="Chung M.K."/>
            <person name="Conn L."/>
            <person name="Conway A.B."/>
            <person name="Conway A.R."/>
            <person name="Creasy T.H."/>
            <person name="Dewar K."/>
            <person name="Dunn P."/>
            <person name="Etgu P."/>
            <person name="Feldblyum T.V."/>
            <person name="Feng J.-D."/>
            <person name="Fong B."/>
            <person name="Fujii C.Y."/>
            <person name="Gill J.E."/>
            <person name="Goldsmith A.D."/>
            <person name="Haas B."/>
            <person name="Hansen N.F."/>
            <person name="Hughes B."/>
            <person name="Huizar L."/>
            <person name="Hunter J.L."/>
            <person name="Jenkins J."/>
            <person name="Johnson-Hopson C."/>
            <person name="Khan S."/>
            <person name="Khaykin E."/>
            <person name="Kim C.J."/>
            <person name="Koo H.L."/>
            <person name="Kremenetskaia I."/>
            <person name="Kurtz D.B."/>
            <person name="Kwan A."/>
            <person name="Lam B."/>
            <person name="Langin-Hooper S."/>
            <person name="Lee A."/>
            <person name="Lee J.M."/>
            <person name="Lenz C.A."/>
            <person name="Li J.H."/>
            <person name="Li Y.-P."/>
            <person name="Lin X."/>
            <person name="Liu S.X."/>
            <person name="Liu Z.A."/>
            <person name="Luros J.S."/>
            <person name="Maiti R."/>
            <person name="Marziali A."/>
            <person name="Militscher J."/>
            <person name="Miranda M."/>
            <person name="Nguyen M."/>
            <person name="Nierman W.C."/>
            <person name="Osborne B.I."/>
            <person name="Pai G."/>
            <person name="Peterson J."/>
            <person name="Pham P.K."/>
            <person name="Rizzo M."/>
            <person name="Rooney T."/>
            <person name="Rowley D."/>
            <person name="Sakano H."/>
            <person name="Salzberg S.L."/>
            <person name="Schwartz J.R."/>
            <person name="Shinn P."/>
            <person name="Southwick A.M."/>
            <person name="Sun H."/>
            <person name="Tallon L.J."/>
            <person name="Tambunga G."/>
            <person name="Toriumi M.J."/>
            <person name="Town C.D."/>
            <person name="Utterback T."/>
            <person name="Van Aken S."/>
            <person name="Vaysberg M."/>
            <person name="Vysotskaia V.S."/>
            <person name="Walker M."/>
            <person name="Wu D."/>
            <person name="Yu G."/>
            <person name="Fraser C.M."/>
            <person name="Venter J.C."/>
            <person name="Davis R.W."/>
        </authorList>
    </citation>
    <scope>NUCLEOTIDE SEQUENCE [LARGE SCALE GENOMIC DNA]</scope>
    <source>
        <strain>cv. Columbia</strain>
    </source>
</reference>
<reference key="2">
    <citation type="journal article" date="2017" name="Plant J.">
        <title>Araport11: a complete reannotation of the Arabidopsis thaliana reference genome.</title>
        <authorList>
            <person name="Cheng C.Y."/>
            <person name="Krishnakumar V."/>
            <person name="Chan A.P."/>
            <person name="Thibaud-Nissen F."/>
            <person name="Schobel S."/>
            <person name="Town C.D."/>
        </authorList>
    </citation>
    <scope>GENOME REANNOTATION</scope>
    <source>
        <strain>cv. Columbia</strain>
    </source>
</reference>
<reference key="3">
    <citation type="journal article" date="2003" name="Science">
        <title>Empirical analysis of transcriptional activity in the Arabidopsis genome.</title>
        <authorList>
            <person name="Yamada K."/>
            <person name="Lim J."/>
            <person name="Dale J.M."/>
            <person name="Chen H."/>
            <person name="Shinn P."/>
            <person name="Palm C.J."/>
            <person name="Southwick A.M."/>
            <person name="Wu H.C."/>
            <person name="Kim C.J."/>
            <person name="Nguyen M."/>
            <person name="Pham P.K."/>
            <person name="Cheuk R.F."/>
            <person name="Karlin-Newmann G."/>
            <person name="Liu S.X."/>
            <person name="Lam B."/>
            <person name="Sakano H."/>
            <person name="Wu T."/>
            <person name="Yu G."/>
            <person name="Miranda M."/>
            <person name="Quach H.L."/>
            <person name="Tripp M."/>
            <person name="Chang C.H."/>
            <person name="Lee J.M."/>
            <person name="Toriumi M.J."/>
            <person name="Chan M.M."/>
            <person name="Tang C.C."/>
            <person name="Onodera C.S."/>
            <person name="Deng J.M."/>
            <person name="Akiyama K."/>
            <person name="Ansari Y."/>
            <person name="Arakawa T."/>
            <person name="Banh J."/>
            <person name="Banno F."/>
            <person name="Bowser L."/>
            <person name="Brooks S.Y."/>
            <person name="Carninci P."/>
            <person name="Chao Q."/>
            <person name="Choy N."/>
            <person name="Enju A."/>
            <person name="Goldsmith A.D."/>
            <person name="Gurjal M."/>
            <person name="Hansen N.F."/>
            <person name="Hayashizaki Y."/>
            <person name="Johnson-Hopson C."/>
            <person name="Hsuan V.W."/>
            <person name="Iida K."/>
            <person name="Karnes M."/>
            <person name="Khan S."/>
            <person name="Koesema E."/>
            <person name="Ishida J."/>
            <person name="Jiang P.X."/>
            <person name="Jones T."/>
            <person name="Kawai J."/>
            <person name="Kamiya A."/>
            <person name="Meyers C."/>
            <person name="Nakajima M."/>
            <person name="Narusaka M."/>
            <person name="Seki M."/>
            <person name="Sakurai T."/>
            <person name="Satou M."/>
            <person name="Tamse R."/>
            <person name="Vaysberg M."/>
            <person name="Wallender E.K."/>
            <person name="Wong C."/>
            <person name="Yamamura Y."/>
            <person name="Yuan S."/>
            <person name="Shinozaki K."/>
            <person name="Davis R.W."/>
            <person name="Theologis A."/>
            <person name="Ecker J.R."/>
        </authorList>
    </citation>
    <scope>NUCLEOTIDE SEQUENCE [LARGE SCALE MRNA]</scope>
    <source>
        <strain>cv. Columbia</strain>
    </source>
</reference>
<reference key="4">
    <citation type="journal article" date="2009" name="Plant J.">
        <title>Functional association of cell death suppressor, Arabidopsis Bax inhibitor-1, with fatty acid 2-hydroxylation through cytochrome b(5).</title>
        <authorList>
            <person name="Nagano M."/>
            <person name="Ihara-Ohori Y."/>
            <person name="Imai H."/>
            <person name="Inada N."/>
            <person name="Fujimoto M."/>
            <person name="Tsutsumi N."/>
            <person name="Uchimiya H."/>
            <person name="Kawai-Yamada M."/>
        </authorList>
    </citation>
    <scope>NOMENCLATURE</scope>
</reference>
<reference key="5">
    <citation type="journal article" date="2012" name="PLoS ONE">
        <title>Higher plant cytochrome b5 polypeptides modulate fatty acid desaturation.</title>
        <authorList>
            <person name="Kumar R."/>
            <person name="Tran L.S."/>
            <person name="Neelakandan A.K."/>
            <person name="Nguyen H.T."/>
        </authorList>
    </citation>
    <scope>NOMENCLATURE</scope>
</reference>
<organism>
    <name type="scientific">Arabidopsis thaliana</name>
    <name type="common">Mouse-ear cress</name>
    <dbReference type="NCBI Taxonomy" id="3702"/>
    <lineage>
        <taxon>Eukaryota</taxon>
        <taxon>Viridiplantae</taxon>
        <taxon>Streptophyta</taxon>
        <taxon>Embryophyta</taxon>
        <taxon>Tracheophyta</taxon>
        <taxon>Spermatophyta</taxon>
        <taxon>Magnoliopsida</taxon>
        <taxon>eudicotyledons</taxon>
        <taxon>Gunneridae</taxon>
        <taxon>Pentapetalae</taxon>
        <taxon>rosids</taxon>
        <taxon>malvids</taxon>
        <taxon>Brassicales</taxon>
        <taxon>Brassicaceae</taxon>
        <taxon>Camelineae</taxon>
        <taxon>Arabidopsis</taxon>
    </lineage>
</organism>
<keyword id="KW-0349">Heme</keyword>
<keyword id="KW-0408">Iron</keyword>
<keyword id="KW-0472">Membrane</keyword>
<keyword id="KW-0479">Metal-binding</keyword>
<keyword id="KW-1185">Reference proteome</keyword>
<keyword id="KW-0812">Transmembrane</keyword>
<keyword id="KW-1133">Transmembrane helix</keyword>
<protein>
    <recommendedName>
        <fullName evidence="4">Cytochrome B5-like protein</fullName>
        <shortName evidence="4">AtCb5LP</shortName>
    </recommendedName>
    <alternativeName>
        <fullName evidence="5">Cytochrome b5 isoform F</fullName>
        <shortName evidence="5">AtCb5-F</shortName>
    </alternativeName>
</protein>
<dbReference type="EMBL" id="AC002292">
    <property type="protein sequence ID" value="AAB71978.1"/>
    <property type="molecule type" value="Genomic_DNA"/>
</dbReference>
<dbReference type="EMBL" id="CP002684">
    <property type="protein sequence ID" value="AEE33716.1"/>
    <property type="molecule type" value="Genomic_DNA"/>
</dbReference>
<dbReference type="EMBL" id="AY049297">
    <property type="protein sequence ID" value="AAK83639.1"/>
    <property type="molecule type" value="mRNA"/>
</dbReference>
<dbReference type="EMBL" id="AY133575">
    <property type="protein sequence ID" value="AAM91405.1"/>
    <property type="molecule type" value="mRNA"/>
</dbReference>
<dbReference type="PIR" id="H96631">
    <property type="entry name" value="H96631"/>
</dbReference>
<dbReference type="RefSeq" id="NP_176265.1">
    <property type="nucleotide sequence ID" value="NM_104749.3"/>
</dbReference>
<dbReference type="SMR" id="O22704"/>
<dbReference type="BioGRID" id="27584">
    <property type="interactions" value="1"/>
</dbReference>
<dbReference type="FunCoup" id="O22704">
    <property type="interactions" value="359"/>
</dbReference>
<dbReference type="IntAct" id="O22704">
    <property type="interactions" value="1"/>
</dbReference>
<dbReference type="STRING" id="3702.O22704"/>
<dbReference type="iPTMnet" id="O22704"/>
<dbReference type="PaxDb" id="3702-AT1G60660.1"/>
<dbReference type="ProteomicsDB" id="222669"/>
<dbReference type="EnsemblPlants" id="AT1G60660.1">
    <property type="protein sequence ID" value="AT1G60660.1"/>
    <property type="gene ID" value="AT1G60660"/>
</dbReference>
<dbReference type="GeneID" id="842360"/>
<dbReference type="Gramene" id="AT1G60660.1">
    <property type="protein sequence ID" value="AT1G60660.1"/>
    <property type="gene ID" value="AT1G60660"/>
</dbReference>
<dbReference type="KEGG" id="ath:AT1G60660"/>
<dbReference type="Araport" id="AT1G60660"/>
<dbReference type="TAIR" id="AT1G60660">
    <property type="gene designation" value="CB5LP"/>
</dbReference>
<dbReference type="eggNOG" id="KOG0537">
    <property type="taxonomic scope" value="Eukaryota"/>
</dbReference>
<dbReference type="HOGENOM" id="CLU_102602_5_1_1"/>
<dbReference type="InParanoid" id="O22704"/>
<dbReference type="OMA" id="WVIVDGH"/>
<dbReference type="OrthoDB" id="260519at2759"/>
<dbReference type="PhylomeDB" id="O22704"/>
<dbReference type="PRO" id="PR:O22704"/>
<dbReference type="Proteomes" id="UP000006548">
    <property type="component" value="Chromosome 1"/>
</dbReference>
<dbReference type="ExpressionAtlas" id="O22704">
    <property type="expression patterns" value="baseline and differential"/>
</dbReference>
<dbReference type="GO" id="GO:0016020">
    <property type="term" value="C:membrane"/>
    <property type="evidence" value="ECO:0007669"/>
    <property type="project" value="UniProtKB-SubCell"/>
</dbReference>
<dbReference type="GO" id="GO:0020037">
    <property type="term" value="F:heme binding"/>
    <property type="evidence" value="ECO:0007669"/>
    <property type="project" value="InterPro"/>
</dbReference>
<dbReference type="GO" id="GO:0046872">
    <property type="term" value="F:metal ion binding"/>
    <property type="evidence" value="ECO:0007669"/>
    <property type="project" value="UniProtKB-KW"/>
</dbReference>
<dbReference type="FunFam" id="3.10.120.10:FF:000007">
    <property type="entry name" value="Sulfite oxidase, mitochondrial"/>
    <property type="match status" value="1"/>
</dbReference>
<dbReference type="Gene3D" id="3.10.120.10">
    <property type="entry name" value="Cytochrome b5-like heme/steroid binding domain"/>
    <property type="match status" value="1"/>
</dbReference>
<dbReference type="InterPro" id="IPR001199">
    <property type="entry name" value="Cyt_B5-like_heme/steroid-bd"/>
</dbReference>
<dbReference type="InterPro" id="IPR036400">
    <property type="entry name" value="Cyt_B5-like_heme/steroid_sf"/>
</dbReference>
<dbReference type="InterPro" id="IPR018506">
    <property type="entry name" value="Cyt_B5_heme-BS"/>
</dbReference>
<dbReference type="InterPro" id="IPR050668">
    <property type="entry name" value="Cytochrome_b5"/>
</dbReference>
<dbReference type="PANTHER" id="PTHR19359">
    <property type="entry name" value="CYTOCHROME B5"/>
    <property type="match status" value="1"/>
</dbReference>
<dbReference type="PANTHER" id="PTHR19359:SF95">
    <property type="entry name" value="CYTOCHROME B5 TYPE B"/>
    <property type="match status" value="1"/>
</dbReference>
<dbReference type="Pfam" id="PF00173">
    <property type="entry name" value="Cyt-b5"/>
    <property type="match status" value="1"/>
</dbReference>
<dbReference type="PRINTS" id="PR00363">
    <property type="entry name" value="CYTOCHROMEB5"/>
</dbReference>
<dbReference type="SMART" id="SM01117">
    <property type="entry name" value="Cyt-b5"/>
    <property type="match status" value="1"/>
</dbReference>
<dbReference type="SUPFAM" id="SSF55856">
    <property type="entry name" value="Cytochrome b5-like heme/steroid binding domain"/>
    <property type="match status" value="1"/>
</dbReference>
<dbReference type="PROSITE" id="PS00191">
    <property type="entry name" value="CYTOCHROME_B5_1"/>
    <property type="match status" value="1"/>
</dbReference>
<dbReference type="PROSITE" id="PS50255">
    <property type="entry name" value="CYTOCHROME_B5_2"/>
    <property type="match status" value="1"/>
</dbReference>
<feature type="chain" id="PRO_0000430956" description="Cytochrome B5-like protein">
    <location>
        <begin position="1"/>
        <end position="121"/>
    </location>
</feature>
<feature type="transmembrane region" description="Helical" evidence="1">
    <location>
        <begin position="1"/>
        <end position="21"/>
    </location>
</feature>
<feature type="domain" description="Cytochrome b5 heme-binding" evidence="2">
    <location>
        <begin position="46"/>
        <end position="121"/>
    </location>
</feature>
<feature type="region of interest" description="Disordered" evidence="3">
    <location>
        <begin position="24"/>
        <end position="49"/>
    </location>
</feature>
<feature type="compositionally biased region" description="Basic and acidic residues" evidence="3">
    <location>
        <begin position="26"/>
        <end position="36"/>
    </location>
</feature>
<feature type="binding site" description="axial binding residue" evidence="2">
    <location>
        <position position="81"/>
    </location>
    <ligand>
        <name>heme</name>
        <dbReference type="ChEBI" id="CHEBI:30413"/>
    </ligand>
    <ligandPart>
        <name>Fe</name>
        <dbReference type="ChEBI" id="CHEBI:18248"/>
    </ligandPart>
</feature>
<feature type="binding site" description="axial binding residue" evidence="2">
    <location>
        <position position="104"/>
    </location>
    <ligand>
        <name>heme</name>
        <dbReference type="ChEBI" id="CHEBI:30413"/>
    </ligand>
    <ligandPart>
        <name>Fe</name>
        <dbReference type="ChEBI" id="CHEBI:18248"/>
    </ligandPart>
</feature>
<gene>
    <name evidence="4" type="primary">CB5LP</name>
    <name evidence="5" type="synonym">CB5-F</name>
    <name evidence="7" type="ordered locus">At1g60660</name>
    <name evidence="8" type="ORF">F8A5.18</name>
</gene>
<sequence>MIAVIGLLLGFLVSALFLIQGKRRRTNDNQEKKRSSSEPVEDVVRPKSYSKSEVAVHNKRNDCWIIIKDKVYDITSYVEEHPGGDAILDHAGDDSTDGFFGPQHATRVFDMIEDFYIGELH</sequence>
<evidence type="ECO:0000255" key="1"/>
<evidence type="ECO:0000255" key="2">
    <source>
        <dbReference type="PROSITE-ProRule" id="PRU00279"/>
    </source>
</evidence>
<evidence type="ECO:0000256" key="3">
    <source>
        <dbReference type="SAM" id="MobiDB-lite"/>
    </source>
</evidence>
<evidence type="ECO:0000303" key="4">
    <source>
    </source>
</evidence>
<evidence type="ECO:0000303" key="5">
    <source>
    </source>
</evidence>
<evidence type="ECO:0000305" key="6"/>
<evidence type="ECO:0000312" key="7">
    <source>
        <dbReference type="Araport" id="AT1G60660"/>
    </source>
</evidence>
<evidence type="ECO:0000312" key="8">
    <source>
        <dbReference type="EMBL" id="AAB71978.1"/>
    </source>
</evidence>
<comment type="subcellular location">
    <subcellularLocation>
        <location evidence="1">Membrane</location>
        <topology evidence="1">Single-pass membrane protein</topology>
    </subcellularLocation>
</comment>
<comment type="similarity">
    <text evidence="6">Belongs to the cytochrome b5 family.</text>
</comment>
<proteinExistence type="evidence at transcript level"/>